<dbReference type="EC" id="7.1.1.9"/>
<dbReference type="EMBL" id="AF030456">
    <property type="protein sequence ID" value="AAB93595.1"/>
    <property type="molecule type" value="Genomic_DNA"/>
</dbReference>
<dbReference type="SMR" id="O47691"/>
<dbReference type="CTD" id="4514"/>
<dbReference type="GO" id="GO:0005743">
    <property type="term" value="C:mitochondrial inner membrane"/>
    <property type="evidence" value="ECO:0007669"/>
    <property type="project" value="UniProtKB-SubCell"/>
</dbReference>
<dbReference type="GO" id="GO:0045277">
    <property type="term" value="C:respiratory chain complex IV"/>
    <property type="evidence" value="ECO:0000250"/>
    <property type="project" value="UniProtKB"/>
</dbReference>
<dbReference type="GO" id="GO:0004129">
    <property type="term" value="F:cytochrome-c oxidase activity"/>
    <property type="evidence" value="ECO:0007669"/>
    <property type="project" value="UniProtKB-EC"/>
</dbReference>
<dbReference type="GO" id="GO:0006123">
    <property type="term" value="P:mitochondrial electron transport, cytochrome c to oxygen"/>
    <property type="evidence" value="ECO:0007669"/>
    <property type="project" value="TreeGrafter"/>
</dbReference>
<dbReference type="GO" id="GO:0008535">
    <property type="term" value="P:respiratory chain complex IV assembly"/>
    <property type="evidence" value="ECO:0000250"/>
    <property type="project" value="UniProtKB"/>
</dbReference>
<dbReference type="CDD" id="cd01665">
    <property type="entry name" value="Cyt_c_Oxidase_III"/>
    <property type="match status" value="1"/>
</dbReference>
<dbReference type="FunFam" id="1.10.287.70:FF:000048">
    <property type="entry name" value="Cytochrome c oxidase subunit 3"/>
    <property type="match status" value="1"/>
</dbReference>
<dbReference type="FunFam" id="1.20.120.80:FF:000002">
    <property type="entry name" value="Cytochrome c oxidase subunit 3"/>
    <property type="match status" value="1"/>
</dbReference>
<dbReference type="Gene3D" id="1.10.287.70">
    <property type="match status" value="1"/>
</dbReference>
<dbReference type="Gene3D" id="1.20.120.80">
    <property type="entry name" value="Cytochrome c oxidase, subunit III, four-helix bundle"/>
    <property type="match status" value="1"/>
</dbReference>
<dbReference type="InterPro" id="IPR024791">
    <property type="entry name" value="Cyt_c/ubiquinol_Oxase_su3"/>
</dbReference>
<dbReference type="InterPro" id="IPR033945">
    <property type="entry name" value="Cyt_c_oxase_su3_dom"/>
</dbReference>
<dbReference type="InterPro" id="IPR000298">
    <property type="entry name" value="Cyt_c_oxidase-like_su3"/>
</dbReference>
<dbReference type="InterPro" id="IPR035973">
    <property type="entry name" value="Cyt_c_oxidase_su3-like_sf"/>
</dbReference>
<dbReference type="InterPro" id="IPR013833">
    <property type="entry name" value="Cyt_c_oxidase_su3_a-hlx"/>
</dbReference>
<dbReference type="PANTHER" id="PTHR11403:SF7">
    <property type="entry name" value="CYTOCHROME C OXIDASE SUBUNIT 3"/>
    <property type="match status" value="1"/>
</dbReference>
<dbReference type="PANTHER" id="PTHR11403">
    <property type="entry name" value="CYTOCHROME C OXIDASE SUBUNIT III"/>
    <property type="match status" value="1"/>
</dbReference>
<dbReference type="Pfam" id="PF00510">
    <property type="entry name" value="COX3"/>
    <property type="match status" value="1"/>
</dbReference>
<dbReference type="SUPFAM" id="SSF81452">
    <property type="entry name" value="Cytochrome c oxidase subunit III-like"/>
    <property type="match status" value="1"/>
</dbReference>
<dbReference type="PROSITE" id="PS50253">
    <property type="entry name" value="COX3"/>
    <property type="match status" value="1"/>
</dbReference>
<comment type="function">
    <text evidence="2">Component of the cytochrome c oxidase, the last enzyme in the mitochondrial electron transport chain which drives oxidative phosphorylation. The respiratory chain contains 3 multisubunit complexes succinate dehydrogenase (complex II, CII), ubiquinol-cytochrome c oxidoreductase (cytochrome b-c1 complex, complex III, CIII) and cytochrome c oxidase (complex IV, CIV), that cooperate to transfer electrons derived from NADH and succinate to molecular oxygen, creating an electrochemical gradient over the inner membrane that drives transmembrane transport and the ATP synthase. Cytochrome c oxidase is the component of the respiratory chain that catalyzes the reduction of oxygen to water. Electrons originating from reduced cytochrome c in the intermembrane space (IMS) are transferred via the dinuclear copper A center (CU(A)) of subunit 2 and heme A of subunit 1 to the active site in subunit 1, a binuclear center (BNC) formed by heme A3 and copper B (CU(B)). The BNC reduces molecular oxygen to 2 water molecules using 4 electrons from cytochrome c in the IMS and 4 protons from the mitochondrial matrix.</text>
</comment>
<comment type="catalytic activity">
    <reaction evidence="2">
        <text>4 Fe(II)-[cytochrome c] + O2 + 8 H(+)(in) = 4 Fe(III)-[cytochrome c] + 2 H2O + 4 H(+)(out)</text>
        <dbReference type="Rhea" id="RHEA:11436"/>
        <dbReference type="Rhea" id="RHEA-COMP:10350"/>
        <dbReference type="Rhea" id="RHEA-COMP:14399"/>
        <dbReference type="ChEBI" id="CHEBI:15377"/>
        <dbReference type="ChEBI" id="CHEBI:15378"/>
        <dbReference type="ChEBI" id="CHEBI:15379"/>
        <dbReference type="ChEBI" id="CHEBI:29033"/>
        <dbReference type="ChEBI" id="CHEBI:29034"/>
        <dbReference type="EC" id="7.1.1.9"/>
    </reaction>
    <physiologicalReaction direction="left-to-right" evidence="2">
        <dbReference type="Rhea" id="RHEA:11437"/>
    </physiologicalReaction>
</comment>
<comment type="subunit">
    <text evidence="1">Component of the cytochrome c oxidase (complex IV, CIV), a multisubunit enzyme composed of 14 subunits. The complex is composed of a catalytic core of 3 subunits MT-CO1, MT-CO2 and MT-CO3, encoded in the mitochondrial DNA, and 11 supernumerary subunits COX4I, COX5A, COX5B, COX6A, COX6B, COX6C, COX7A, COX7B, COX7C, COX8 and NDUFA4, which are encoded in the nuclear genome. The complex exists as a monomer or a dimer and forms supercomplexes (SCs) in the inner mitochondrial membrane with NADH-ubiquinone oxidoreductase (complex I, CI) and ubiquinol-cytochrome c oxidoreductase (cytochrome b-c1 complex, complex III, CIII), resulting in different assemblies (supercomplex SCI(1)III(2)IV(1) and megacomplex MCI(2)III(2)IV(2)).</text>
</comment>
<comment type="subcellular location">
    <subcellularLocation>
        <location evidence="1">Mitochondrion inner membrane</location>
        <topology evidence="1">Multi-pass membrane protein</topology>
    </subcellularLocation>
</comment>
<comment type="similarity">
    <text evidence="3">Belongs to the cytochrome c oxidase subunit 3 family.</text>
</comment>
<keyword id="KW-0472">Membrane</keyword>
<keyword id="KW-0496">Mitochondrion</keyword>
<keyword id="KW-0999">Mitochondrion inner membrane</keyword>
<keyword id="KW-1278">Translocase</keyword>
<keyword id="KW-0812">Transmembrane</keyword>
<keyword id="KW-1133">Transmembrane helix</keyword>
<sequence length="261" mass="29899">MTHQTHAYHMVNPSPWPLTGALSALLMTSGLIMWFHFNSTILLMLGLTTNMLTMYQWWRDIIRESTFQGHHTPTVQKGLRYGMILFIISEVLFFTGFFWAFYHSSLAPTPELGGCWPPTGIHPLNPLEVPLLNTSVLLASGVSITWAHHSLMEGNRNHMLQALFITIALGVYFTLLQASEYYEAPFTISDGVYGSTFFVATGFHGLHVIIGSTFLIVCFFRQLKFHFTSSHHFGFEAAAWYWHFVDVVWLFLYVSIYWWGS</sequence>
<proteinExistence type="inferred from homology"/>
<reference key="1">
    <citation type="journal article" date="1999" name="Mol. Phylogenet. Evol.">
        <title>Phylogenetic relationships in the bovid subfamily Antilopinae based on mitochondrial DNA sequences.</title>
        <authorList>
            <person name="Rebholz W.E.R."/>
            <person name="Harley E.H."/>
        </authorList>
    </citation>
    <scope>NUCLEOTIDE SEQUENCE [GENOMIC DNA]</scope>
</reference>
<geneLocation type="mitochondrion"/>
<gene>
    <name type="primary">MT-CO3</name>
    <name type="synonym">COIII</name>
    <name type="synonym">COXIII</name>
    <name type="synonym">MTCO3</name>
</gene>
<protein>
    <recommendedName>
        <fullName>Cytochrome c oxidase subunit 3</fullName>
        <ecNumber>7.1.1.9</ecNumber>
    </recommendedName>
    <alternativeName>
        <fullName>Cytochrome c oxidase polypeptide III</fullName>
    </alternativeName>
</protein>
<organism>
    <name type="scientific">Aepyceros melampus</name>
    <name type="common">Impala</name>
    <dbReference type="NCBI Taxonomy" id="9897"/>
    <lineage>
        <taxon>Eukaryota</taxon>
        <taxon>Metazoa</taxon>
        <taxon>Chordata</taxon>
        <taxon>Craniata</taxon>
        <taxon>Vertebrata</taxon>
        <taxon>Euteleostomi</taxon>
        <taxon>Mammalia</taxon>
        <taxon>Eutheria</taxon>
        <taxon>Laurasiatheria</taxon>
        <taxon>Artiodactyla</taxon>
        <taxon>Ruminantia</taxon>
        <taxon>Pecora</taxon>
        <taxon>Bovidae</taxon>
        <taxon>Aepycerotinae</taxon>
        <taxon>Aepyceros</taxon>
    </lineage>
</organism>
<feature type="chain" id="PRO_0000183728" description="Cytochrome c oxidase subunit 3">
    <location>
        <begin position="1"/>
        <end position="261"/>
    </location>
</feature>
<feature type="topological domain" description="Mitochondrial matrix" evidence="1">
    <location>
        <begin position="1"/>
        <end position="15"/>
    </location>
</feature>
<feature type="transmembrane region" description="Helical; Name=I" evidence="1">
    <location>
        <begin position="16"/>
        <end position="34"/>
    </location>
</feature>
<feature type="topological domain" description="Mitochondrial intermembrane" evidence="1">
    <location>
        <begin position="35"/>
        <end position="40"/>
    </location>
</feature>
<feature type="transmembrane region" description="Helical; Name=II" evidence="1">
    <location>
        <begin position="41"/>
        <end position="66"/>
    </location>
</feature>
<feature type="topological domain" description="Mitochondrial matrix" evidence="1">
    <location>
        <begin position="67"/>
        <end position="72"/>
    </location>
</feature>
<feature type="transmembrane region" description="Helical; Name=III" evidence="1">
    <location>
        <begin position="73"/>
        <end position="105"/>
    </location>
</feature>
<feature type="topological domain" description="Mitochondrial intermembrane" evidence="1">
    <location>
        <begin position="106"/>
        <end position="128"/>
    </location>
</feature>
<feature type="transmembrane region" description="Helical; Name=IV" evidence="1">
    <location>
        <begin position="129"/>
        <end position="152"/>
    </location>
</feature>
<feature type="topological domain" description="Mitochondrial matrix" evidence="1">
    <location>
        <begin position="153"/>
        <end position="155"/>
    </location>
</feature>
<feature type="transmembrane region" description="Helical; Name=V" evidence="1">
    <location>
        <begin position="156"/>
        <end position="183"/>
    </location>
</feature>
<feature type="topological domain" description="Mitochondrial intermembrane" evidence="1">
    <location>
        <begin position="184"/>
        <end position="190"/>
    </location>
</feature>
<feature type="transmembrane region" description="Helical; Name=VI" evidence="1">
    <location>
        <begin position="191"/>
        <end position="223"/>
    </location>
</feature>
<feature type="topological domain" description="Mitochondrial matrix" evidence="1">
    <location>
        <begin position="224"/>
        <end position="232"/>
    </location>
</feature>
<feature type="transmembrane region" description="Helical; Name=VII" evidence="1">
    <location>
        <begin position="233"/>
        <end position="256"/>
    </location>
</feature>
<feature type="topological domain" description="Mitochondrial intermembrane" evidence="1">
    <location>
        <begin position="257"/>
        <end position="261"/>
    </location>
</feature>
<name>COX3_AEPME</name>
<evidence type="ECO:0000250" key="1">
    <source>
        <dbReference type="UniProtKB" id="P00415"/>
    </source>
</evidence>
<evidence type="ECO:0000250" key="2">
    <source>
        <dbReference type="UniProtKB" id="P00420"/>
    </source>
</evidence>
<evidence type="ECO:0000305" key="3"/>
<accession>O47691</accession>